<name>CCNC_XENTR</name>
<dbReference type="EMBL" id="CR762131">
    <property type="protein sequence ID" value="CAJ81984.1"/>
    <property type="molecule type" value="mRNA"/>
</dbReference>
<dbReference type="EMBL" id="BC061613">
    <property type="protein sequence ID" value="AAH61613.1"/>
    <property type="status" value="ALT_INIT"/>
    <property type="molecule type" value="mRNA"/>
</dbReference>
<dbReference type="RefSeq" id="NP_989157.2">
    <property type="nucleotide sequence ID" value="NM_203826.2"/>
</dbReference>
<dbReference type="SMR" id="Q28F72"/>
<dbReference type="FunCoup" id="Q28F72">
    <property type="interactions" value="2287"/>
</dbReference>
<dbReference type="STRING" id="8364.ENSXETP00000041593"/>
<dbReference type="PaxDb" id="8364-ENSXETP00000055094"/>
<dbReference type="DNASU" id="394762"/>
<dbReference type="GeneID" id="394762"/>
<dbReference type="KEGG" id="xtr:394762"/>
<dbReference type="AGR" id="Xenbase:XB-GENE-922006"/>
<dbReference type="CTD" id="892"/>
<dbReference type="Xenbase" id="XB-GENE-922006">
    <property type="gene designation" value="ccnc"/>
</dbReference>
<dbReference type="eggNOG" id="KOG0794">
    <property type="taxonomic scope" value="Eukaryota"/>
</dbReference>
<dbReference type="HOGENOM" id="CLU_034754_1_1_1"/>
<dbReference type="InParanoid" id="Q28F72"/>
<dbReference type="OMA" id="CLLHPPH"/>
<dbReference type="OrthoDB" id="10266018at2759"/>
<dbReference type="PhylomeDB" id="Q28F72"/>
<dbReference type="Proteomes" id="UP000008143">
    <property type="component" value="Chromosome 5"/>
</dbReference>
<dbReference type="Bgee" id="ENSXETG00000026026">
    <property type="expression patterns" value="Expressed in egg cell and 15 other cell types or tissues"/>
</dbReference>
<dbReference type="GO" id="GO:0005634">
    <property type="term" value="C:nucleus"/>
    <property type="evidence" value="ECO:0007669"/>
    <property type="project" value="UniProtKB-SubCell"/>
</dbReference>
<dbReference type="GO" id="GO:0016538">
    <property type="term" value="F:cyclin-dependent protein serine/threonine kinase regulator activity"/>
    <property type="evidence" value="ECO:0007669"/>
    <property type="project" value="InterPro"/>
</dbReference>
<dbReference type="GO" id="GO:0006357">
    <property type="term" value="P:regulation of transcription by RNA polymerase II"/>
    <property type="evidence" value="ECO:0007669"/>
    <property type="project" value="InterPro"/>
</dbReference>
<dbReference type="CDD" id="cd20513">
    <property type="entry name" value="CYCLIN_CCNC_rpt1"/>
    <property type="match status" value="1"/>
</dbReference>
<dbReference type="CDD" id="cd20514">
    <property type="entry name" value="CYCLIN_CCNC_rpt2"/>
    <property type="match status" value="1"/>
</dbReference>
<dbReference type="FunFam" id="1.10.472.10:FF:000015">
    <property type="entry name" value="Putative cyclin-c"/>
    <property type="match status" value="1"/>
</dbReference>
<dbReference type="Gene3D" id="1.10.472.10">
    <property type="entry name" value="Cyclin-like"/>
    <property type="match status" value="2"/>
</dbReference>
<dbReference type="InterPro" id="IPR013763">
    <property type="entry name" value="Cyclin-like_dom"/>
</dbReference>
<dbReference type="InterPro" id="IPR036915">
    <property type="entry name" value="Cyclin-like_sf"/>
</dbReference>
<dbReference type="InterPro" id="IPR043198">
    <property type="entry name" value="Cyclin/Ssn8"/>
</dbReference>
<dbReference type="InterPro" id="IPR031658">
    <property type="entry name" value="Cyclin_C_2"/>
</dbReference>
<dbReference type="InterPro" id="IPR006671">
    <property type="entry name" value="Cyclin_N"/>
</dbReference>
<dbReference type="PANTHER" id="PTHR10026">
    <property type="entry name" value="CYCLIN"/>
    <property type="match status" value="1"/>
</dbReference>
<dbReference type="Pfam" id="PF16899">
    <property type="entry name" value="Cyclin_C_2"/>
    <property type="match status" value="1"/>
</dbReference>
<dbReference type="Pfam" id="PF00134">
    <property type="entry name" value="Cyclin_N"/>
    <property type="match status" value="1"/>
</dbReference>
<dbReference type="PIRSF" id="PIRSF028758">
    <property type="entry name" value="Cyclin, C/H/G types"/>
    <property type="match status" value="1"/>
</dbReference>
<dbReference type="SMART" id="SM00385">
    <property type="entry name" value="CYCLIN"/>
    <property type="match status" value="2"/>
</dbReference>
<dbReference type="SUPFAM" id="SSF47954">
    <property type="entry name" value="Cyclin-like"/>
    <property type="match status" value="2"/>
</dbReference>
<protein>
    <recommendedName>
        <fullName>Cyclin-C</fullName>
    </recommendedName>
</protein>
<keyword id="KW-0010">Activator</keyword>
<keyword id="KW-0195">Cyclin</keyword>
<keyword id="KW-0539">Nucleus</keyword>
<keyword id="KW-1185">Reference proteome</keyword>
<keyword id="KW-0678">Repressor</keyword>
<keyword id="KW-0804">Transcription</keyword>
<keyword id="KW-0805">Transcription regulation</keyword>
<gene>
    <name type="primary">ccnc</name>
    <name type="ORF">TGas144o20.1</name>
</gene>
<organism>
    <name type="scientific">Xenopus tropicalis</name>
    <name type="common">Western clawed frog</name>
    <name type="synonym">Silurana tropicalis</name>
    <dbReference type="NCBI Taxonomy" id="8364"/>
    <lineage>
        <taxon>Eukaryota</taxon>
        <taxon>Metazoa</taxon>
        <taxon>Chordata</taxon>
        <taxon>Craniata</taxon>
        <taxon>Vertebrata</taxon>
        <taxon>Euteleostomi</taxon>
        <taxon>Amphibia</taxon>
        <taxon>Batrachia</taxon>
        <taxon>Anura</taxon>
        <taxon>Pipoidea</taxon>
        <taxon>Pipidae</taxon>
        <taxon>Xenopodinae</taxon>
        <taxon>Xenopus</taxon>
        <taxon>Silurana</taxon>
    </lineage>
</organism>
<reference key="1">
    <citation type="submission" date="2006-10" db="EMBL/GenBank/DDBJ databases">
        <authorList>
            <consortium name="Sanger Xenopus tropicalis EST/cDNA project"/>
        </authorList>
    </citation>
    <scope>NUCLEOTIDE SEQUENCE [LARGE SCALE MRNA]</scope>
    <source>
        <tissue>Gastrula</tissue>
    </source>
</reference>
<reference key="2">
    <citation type="submission" date="2003-11" db="EMBL/GenBank/DDBJ databases">
        <authorList>
            <consortium name="NIH - Xenopus Gene Collection (XGC) project"/>
        </authorList>
    </citation>
    <scope>NUCLEOTIDE SEQUENCE [LARGE SCALE MRNA]</scope>
    <source>
        <tissue>Embryo</tissue>
    </source>
</reference>
<evidence type="ECO:0000250" key="1"/>
<evidence type="ECO:0000256" key="2">
    <source>
        <dbReference type="SAM" id="MobiDB-lite"/>
    </source>
</evidence>
<evidence type="ECO:0000305" key="3"/>
<sequence length="283" mass="33233">MAGNFWQSSHYLQWILDKQDLLKERQKDLKFLSEEEYWKLQIFFTNVIQALGEHLKLRQQVIATATVYFKRFYARYSLKSIDPVLMAPTCVFLASKVEEFGVVSNTRLISAATSVLKTRFSYAFPKEFPYRMNHILECEFYLLELMDCCLIVYHPYRPLLQYVQDMGQEDMLLPLAWRIVNDTYRTDLCLLYPPFMIALACLHVACVVQQKDARQWFAELSVDMEKILEIIRVILKLYEQWKNFDERKEMATILNKMPKPKPPPNSEGEQGTNGSQSSGYSQS</sequence>
<proteinExistence type="evidence at transcript level"/>
<accession>Q28F72</accession>
<accession>Q6P7L7</accession>
<comment type="function">
    <text evidence="1">Component of the Mediator complex, a coactivator involved in regulated gene transcription of nearly all RNA polymerase II-dependent genes. Mediator functions as a bridge to convey information from gene-specific regulatory proteins to the basal RNA polymerase II transcription machinery. Mediator is recruited to promoters by direct interactions with regulatory proteins and serves as a scaffold for the assembly of a functional preinitiation complex with RNA polymerase II and the general transcription factors. Binds to and activates cyclin-dependent kinase cdk8 that phosphorylates the CTD (C-terminal domain) of the large subunit of RNA polymerase II (RNAp II), which may inhibit the formation of a transcription initiation complex (By similarity).</text>
</comment>
<comment type="subunit">
    <text evidence="1">Component of the Mediator complex. The cylin/CDK pair formed by ccnc/cdk8 also associates with the large subunit of RNA polymerase II (By similarity).</text>
</comment>
<comment type="subcellular location">
    <subcellularLocation>
        <location evidence="3">Nucleus</location>
    </subcellularLocation>
</comment>
<comment type="similarity">
    <text evidence="3">Belongs to the cyclin family. Cyclin C subfamily.</text>
</comment>
<comment type="sequence caution" evidence="3">
    <conflict type="erroneous initiation">
        <sequence resource="EMBL-CDS" id="AAH61613"/>
    </conflict>
</comment>
<feature type="chain" id="PRO_0000314259" description="Cyclin-C">
    <location>
        <begin position="1"/>
        <end position="283"/>
    </location>
</feature>
<feature type="domain" description="Cyclin N-terminal">
    <location>
        <begin position="46"/>
        <end position="144"/>
    </location>
</feature>
<feature type="region of interest" description="Disordered" evidence="2">
    <location>
        <begin position="252"/>
        <end position="283"/>
    </location>
</feature>
<feature type="compositionally biased region" description="Polar residues" evidence="2">
    <location>
        <begin position="267"/>
        <end position="283"/>
    </location>
</feature>